<keyword id="KW-0903">Direct protein sequencing</keyword>
<keyword id="KW-0456">Lyase</keyword>
<keyword id="KW-1185">Reference proteome</keyword>
<comment type="function">
    <text evidence="1">Catalyzes the reversible conversion of L-aspartate to fumarate and ammonia.</text>
</comment>
<comment type="catalytic activity">
    <reaction evidence="1">
        <text>L-aspartate = fumarate + NH4(+)</text>
        <dbReference type="Rhea" id="RHEA:16601"/>
        <dbReference type="ChEBI" id="CHEBI:28938"/>
        <dbReference type="ChEBI" id="CHEBI:29806"/>
        <dbReference type="ChEBI" id="CHEBI:29991"/>
        <dbReference type="EC" id="4.3.1.1"/>
    </reaction>
</comment>
<comment type="subunit">
    <text evidence="1">Homotetramer.</text>
</comment>
<comment type="induction">
    <text evidence="2">Part of the ans operon, which contains ansA, encoding L-asparaginase, and ansB (PubMed:1711029). Contains two transcription start sites, depending on the growth medium (PubMed:1711029).</text>
</comment>
<comment type="similarity">
    <text evidence="4">Belongs to the class-II fumarase/aspartase family. Aspartase subfamily.</text>
</comment>
<reference key="1">
    <citation type="journal article" date="1991" name="J. Bacteriol.">
        <title>Cloning, nucleotide sequence, and expression of the Bacillus subtilis ans operon, which codes for L-asparaginase and L-aspartase.</title>
        <authorList>
            <person name="Sun D."/>
            <person name="Setlow P."/>
        </authorList>
    </citation>
    <scope>NUCLEOTIDE SEQUENCE [GENOMIC DNA]</scope>
    <scope>PROTEIN SEQUENCE OF 1-22</scope>
    <scope>TRANSCRIPTIONAL REGULATION</scope>
    <source>
        <strain>168 / PS832</strain>
    </source>
</reference>
<reference key="2">
    <citation type="journal article" date="1996" name="Microbiology">
        <title>Systematic sequencing of the 283 kb 210 degrees-232 degrees region of the Bacillus subtilis genome containing the skin element and many sporulation genes.</title>
        <authorList>
            <person name="Mizuno M."/>
            <person name="Masuda S."/>
            <person name="Takemaru K."/>
            <person name="Hosono S."/>
            <person name="Sato T."/>
            <person name="Takeuchi M."/>
            <person name="Kobayashi Y."/>
        </authorList>
    </citation>
    <scope>NUCLEOTIDE SEQUENCE [GENOMIC DNA]</scope>
    <source>
        <strain>168 / JH642</strain>
    </source>
</reference>
<reference key="3">
    <citation type="journal article" date="1997" name="Nature">
        <title>The complete genome sequence of the Gram-positive bacterium Bacillus subtilis.</title>
        <authorList>
            <person name="Kunst F."/>
            <person name="Ogasawara N."/>
            <person name="Moszer I."/>
            <person name="Albertini A.M."/>
            <person name="Alloni G."/>
            <person name="Azevedo V."/>
            <person name="Bertero M.G."/>
            <person name="Bessieres P."/>
            <person name="Bolotin A."/>
            <person name="Borchert S."/>
            <person name="Borriss R."/>
            <person name="Boursier L."/>
            <person name="Brans A."/>
            <person name="Braun M."/>
            <person name="Brignell S.C."/>
            <person name="Bron S."/>
            <person name="Brouillet S."/>
            <person name="Bruschi C.V."/>
            <person name="Caldwell B."/>
            <person name="Capuano V."/>
            <person name="Carter N.M."/>
            <person name="Choi S.-K."/>
            <person name="Codani J.-J."/>
            <person name="Connerton I.F."/>
            <person name="Cummings N.J."/>
            <person name="Daniel R.A."/>
            <person name="Denizot F."/>
            <person name="Devine K.M."/>
            <person name="Duesterhoeft A."/>
            <person name="Ehrlich S.D."/>
            <person name="Emmerson P.T."/>
            <person name="Entian K.-D."/>
            <person name="Errington J."/>
            <person name="Fabret C."/>
            <person name="Ferrari E."/>
            <person name="Foulger D."/>
            <person name="Fritz C."/>
            <person name="Fujita M."/>
            <person name="Fujita Y."/>
            <person name="Fuma S."/>
            <person name="Galizzi A."/>
            <person name="Galleron N."/>
            <person name="Ghim S.-Y."/>
            <person name="Glaser P."/>
            <person name="Goffeau A."/>
            <person name="Golightly E.J."/>
            <person name="Grandi G."/>
            <person name="Guiseppi G."/>
            <person name="Guy B.J."/>
            <person name="Haga K."/>
            <person name="Haiech J."/>
            <person name="Harwood C.R."/>
            <person name="Henaut A."/>
            <person name="Hilbert H."/>
            <person name="Holsappel S."/>
            <person name="Hosono S."/>
            <person name="Hullo M.-F."/>
            <person name="Itaya M."/>
            <person name="Jones L.-M."/>
            <person name="Joris B."/>
            <person name="Karamata D."/>
            <person name="Kasahara Y."/>
            <person name="Klaerr-Blanchard M."/>
            <person name="Klein C."/>
            <person name="Kobayashi Y."/>
            <person name="Koetter P."/>
            <person name="Koningstein G."/>
            <person name="Krogh S."/>
            <person name="Kumano M."/>
            <person name="Kurita K."/>
            <person name="Lapidus A."/>
            <person name="Lardinois S."/>
            <person name="Lauber J."/>
            <person name="Lazarevic V."/>
            <person name="Lee S.-M."/>
            <person name="Levine A."/>
            <person name="Liu H."/>
            <person name="Masuda S."/>
            <person name="Mauel C."/>
            <person name="Medigue C."/>
            <person name="Medina N."/>
            <person name="Mellado R.P."/>
            <person name="Mizuno M."/>
            <person name="Moestl D."/>
            <person name="Nakai S."/>
            <person name="Noback M."/>
            <person name="Noone D."/>
            <person name="O'Reilly M."/>
            <person name="Ogawa K."/>
            <person name="Ogiwara A."/>
            <person name="Oudega B."/>
            <person name="Park S.-H."/>
            <person name="Parro V."/>
            <person name="Pohl T.M."/>
            <person name="Portetelle D."/>
            <person name="Porwollik S."/>
            <person name="Prescott A.M."/>
            <person name="Presecan E."/>
            <person name="Pujic P."/>
            <person name="Purnelle B."/>
            <person name="Rapoport G."/>
            <person name="Rey M."/>
            <person name="Reynolds S."/>
            <person name="Rieger M."/>
            <person name="Rivolta C."/>
            <person name="Rocha E."/>
            <person name="Roche B."/>
            <person name="Rose M."/>
            <person name="Sadaie Y."/>
            <person name="Sato T."/>
            <person name="Scanlan E."/>
            <person name="Schleich S."/>
            <person name="Schroeter R."/>
            <person name="Scoffone F."/>
            <person name="Sekiguchi J."/>
            <person name="Sekowska A."/>
            <person name="Seror S.J."/>
            <person name="Serror P."/>
            <person name="Shin B.-S."/>
            <person name="Soldo B."/>
            <person name="Sorokin A."/>
            <person name="Tacconi E."/>
            <person name="Takagi T."/>
            <person name="Takahashi H."/>
            <person name="Takemaru K."/>
            <person name="Takeuchi M."/>
            <person name="Tamakoshi A."/>
            <person name="Tanaka T."/>
            <person name="Terpstra P."/>
            <person name="Tognoni A."/>
            <person name="Tosato V."/>
            <person name="Uchiyama S."/>
            <person name="Vandenbol M."/>
            <person name="Vannier F."/>
            <person name="Vassarotti A."/>
            <person name="Viari A."/>
            <person name="Wambutt R."/>
            <person name="Wedler E."/>
            <person name="Wedler H."/>
            <person name="Weitzenegger T."/>
            <person name="Winters P."/>
            <person name="Wipat A."/>
            <person name="Yamamoto H."/>
            <person name="Yamane K."/>
            <person name="Yasumoto K."/>
            <person name="Yata K."/>
            <person name="Yoshida K."/>
            <person name="Yoshikawa H.-F."/>
            <person name="Zumstein E."/>
            <person name="Yoshikawa H."/>
            <person name="Danchin A."/>
        </authorList>
    </citation>
    <scope>NUCLEOTIDE SEQUENCE [LARGE SCALE GENOMIC DNA]</scope>
    <source>
        <strain>168</strain>
    </source>
</reference>
<reference key="4">
    <citation type="journal article" date="2009" name="Microbiology">
        <title>From a consortium sequence to a unified sequence: the Bacillus subtilis 168 reference genome a decade later.</title>
        <authorList>
            <person name="Barbe V."/>
            <person name="Cruveiller S."/>
            <person name="Kunst F."/>
            <person name="Lenoble P."/>
            <person name="Meurice G."/>
            <person name="Sekowska A."/>
            <person name="Vallenet D."/>
            <person name="Wang T."/>
            <person name="Moszer I."/>
            <person name="Medigue C."/>
            <person name="Danchin A."/>
        </authorList>
    </citation>
    <scope>SEQUENCE REVISION TO 144 AND 182</scope>
</reference>
<organism>
    <name type="scientific">Bacillus subtilis (strain 168)</name>
    <dbReference type="NCBI Taxonomy" id="224308"/>
    <lineage>
        <taxon>Bacteria</taxon>
        <taxon>Bacillati</taxon>
        <taxon>Bacillota</taxon>
        <taxon>Bacilli</taxon>
        <taxon>Bacillales</taxon>
        <taxon>Bacillaceae</taxon>
        <taxon>Bacillus</taxon>
    </lineage>
</organism>
<accession>P26899</accession>
<sequence length="475" mass="52504">MLNGQKEYRVEKDFLGEKQIEADVYYGIQTLRASENFPITGYKIHEEMINALAIVKKAAALANMDVKRLYEGIGQAIVQAADEILEGKWHDQFIVDPIQGGAGTSMNMNANEVIGNRALEIMGHKKGDYIHLSPNTHVNMSQSTNDVFPTAIHISTLKLLEKLLKTMEDMHSVFKQKAQEFDSVIKMGRTHLQDAVPIRLGQEFEAYSRVLERDIKRIKQSRQHLYEVNMGATAVGTGLNADPEYIKQVVKHLADISGLPLVGADHLVDATQNTDAYTEVSASLKVCMMNMSKIANDLRLMASGPRAGLAEISLPARQPGSSIMPGKVNPVMAELINQIAFQVIGNDNTICLASEAGQLELNVMEPVLVFNLLQSISIMNNGFRSFTDNCLKGIEANEKRMKQYVEKSAGVITAVNPHLGYEAAARIAREAIMTGQSVRDLCLQHDVLTEEELDIILNPYEMTKPGIAGKELLEK</sequence>
<feature type="chain" id="PRO_0000161336" description="Aspartate ammonia-lyase">
    <location>
        <begin position="1"/>
        <end position="475"/>
    </location>
</feature>
<feature type="region of interest" description="SS loop" evidence="1">
    <location>
        <begin position="320"/>
        <end position="329"/>
    </location>
</feature>
<feature type="active site" description="Proton acceptor" evidence="1">
    <location>
        <position position="321"/>
    </location>
</feature>
<feature type="binding site" evidence="1">
    <location>
        <position position="104"/>
    </location>
    <ligand>
        <name>L-aspartate</name>
        <dbReference type="ChEBI" id="CHEBI:29991"/>
    </ligand>
</feature>
<feature type="binding site" evidence="1">
    <location>
        <position position="143"/>
    </location>
    <ligand>
        <name>L-aspartate</name>
        <dbReference type="ChEBI" id="CHEBI:29991"/>
    </ligand>
</feature>
<feature type="binding site" evidence="1">
    <location>
        <position position="144"/>
    </location>
    <ligand>
        <name>L-aspartate</name>
        <dbReference type="ChEBI" id="CHEBI:29991"/>
    </ligand>
</feature>
<feature type="binding site" evidence="1">
    <location>
        <position position="145"/>
    </location>
    <ligand>
        <name>L-aspartate</name>
        <dbReference type="ChEBI" id="CHEBI:29991"/>
    </ligand>
</feature>
<feature type="binding site" evidence="1">
    <location>
        <position position="190"/>
    </location>
    <ligand>
        <name>L-aspartate</name>
        <dbReference type="ChEBI" id="CHEBI:29991"/>
    </ligand>
</feature>
<feature type="binding site" evidence="1">
    <location>
        <position position="191"/>
    </location>
    <ligand>
        <name>L-aspartate</name>
        <dbReference type="ChEBI" id="CHEBI:29991"/>
    </ligand>
</feature>
<feature type="binding site" evidence="1">
    <location>
        <position position="322"/>
    </location>
    <ligand>
        <name>L-aspartate</name>
        <dbReference type="ChEBI" id="CHEBI:29991"/>
    </ligand>
</feature>
<feature type="binding site" evidence="1">
    <location>
        <position position="327"/>
    </location>
    <ligand>
        <name>L-aspartate</name>
        <dbReference type="ChEBI" id="CHEBI:29991"/>
    </ligand>
</feature>
<feature type="sequence conflict" description="In Ref. 1; AAA22244 and 2; BAA12643." evidence="4" ref="1 2">
    <original>T</original>
    <variation>Q</variation>
    <location>
        <position position="144"/>
    </location>
</feature>
<feature type="sequence conflict" description="In Ref. 1; AAA22244 and 2; BAA12643." evidence="4" ref="1 2">
    <original>D</original>
    <variation>H</variation>
    <location>
        <position position="182"/>
    </location>
</feature>
<evidence type="ECO:0000250" key="1">
    <source>
        <dbReference type="UniProtKB" id="Q9LCC6"/>
    </source>
</evidence>
<evidence type="ECO:0000269" key="2">
    <source>
    </source>
</evidence>
<evidence type="ECO:0000303" key="3">
    <source>
    </source>
</evidence>
<evidence type="ECO:0000305" key="4"/>
<proteinExistence type="evidence at protein level"/>
<name>ASPA_BACSU</name>
<dbReference type="EC" id="4.3.1.1" evidence="1"/>
<dbReference type="EMBL" id="M63264">
    <property type="protein sequence ID" value="AAA22244.1"/>
    <property type="molecule type" value="Genomic_DNA"/>
</dbReference>
<dbReference type="EMBL" id="D84432">
    <property type="protein sequence ID" value="BAA12643.1"/>
    <property type="molecule type" value="Genomic_DNA"/>
</dbReference>
<dbReference type="EMBL" id="AL009126">
    <property type="protein sequence ID" value="CAB14289.2"/>
    <property type="molecule type" value="Genomic_DNA"/>
</dbReference>
<dbReference type="PIR" id="B39440">
    <property type="entry name" value="UFBSD"/>
</dbReference>
<dbReference type="RefSeq" id="NP_390238.2">
    <property type="nucleotide sequence ID" value="NC_000964.3"/>
</dbReference>
<dbReference type="SMR" id="P26899"/>
<dbReference type="FunCoup" id="P26899">
    <property type="interactions" value="49"/>
</dbReference>
<dbReference type="IntAct" id="P26899">
    <property type="interactions" value="2"/>
</dbReference>
<dbReference type="STRING" id="224308.BSU23570"/>
<dbReference type="jPOST" id="P26899"/>
<dbReference type="PaxDb" id="224308-BSU23570"/>
<dbReference type="EnsemblBacteria" id="CAB14289">
    <property type="protein sequence ID" value="CAB14289"/>
    <property type="gene ID" value="BSU_23570"/>
</dbReference>
<dbReference type="GeneID" id="938721"/>
<dbReference type="KEGG" id="bsu:BSU23570"/>
<dbReference type="PATRIC" id="fig|224308.179.peg.2569"/>
<dbReference type="eggNOG" id="COG1027">
    <property type="taxonomic scope" value="Bacteria"/>
</dbReference>
<dbReference type="InParanoid" id="P26899"/>
<dbReference type="OrthoDB" id="9802809at2"/>
<dbReference type="PhylomeDB" id="P26899"/>
<dbReference type="BioCyc" id="BSUB:BSU23570-MONOMER"/>
<dbReference type="Proteomes" id="UP000001570">
    <property type="component" value="Chromosome"/>
</dbReference>
<dbReference type="GO" id="GO:0005829">
    <property type="term" value="C:cytosol"/>
    <property type="evidence" value="ECO:0000318"/>
    <property type="project" value="GO_Central"/>
</dbReference>
<dbReference type="GO" id="GO:0008797">
    <property type="term" value="F:aspartate ammonia-lyase activity"/>
    <property type="evidence" value="ECO:0000318"/>
    <property type="project" value="GO_Central"/>
</dbReference>
<dbReference type="GO" id="GO:0006531">
    <property type="term" value="P:aspartate metabolic process"/>
    <property type="evidence" value="ECO:0000318"/>
    <property type="project" value="GO_Central"/>
</dbReference>
<dbReference type="GO" id="GO:0006099">
    <property type="term" value="P:tricarboxylic acid cycle"/>
    <property type="evidence" value="ECO:0007669"/>
    <property type="project" value="InterPro"/>
</dbReference>
<dbReference type="CDD" id="cd01357">
    <property type="entry name" value="Aspartase"/>
    <property type="match status" value="1"/>
</dbReference>
<dbReference type="FunFam" id="1.10.40.30:FF:000002">
    <property type="entry name" value="Fumarate hydratase class II"/>
    <property type="match status" value="1"/>
</dbReference>
<dbReference type="FunFam" id="1.10.275.10:FF:000001">
    <property type="entry name" value="Fumarate hydratase, mitochondrial"/>
    <property type="match status" value="1"/>
</dbReference>
<dbReference type="FunFam" id="1.20.200.10:FF:000001">
    <property type="entry name" value="Fumarate hydratase, mitochondrial"/>
    <property type="match status" value="1"/>
</dbReference>
<dbReference type="Gene3D" id="1.10.40.30">
    <property type="entry name" value="Fumarase/aspartase (C-terminal domain)"/>
    <property type="match status" value="1"/>
</dbReference>
<dbReference type="Gene3D" id="1.20.200.10">
    <property type="entry name" value="Fumarase/aspartase (Central domain)"/>
    <property type="match status" value="1"/>
</dbReference>
<dbReference type="Gene3D" id="1.10.275.10">
    <property type="entry name" value="Fumarase/aspartase (N-terminal domain)"/>
    <property type="match status" value="1"/>
</dbReference>
<dbReference type="InterPro" id="IPR004708">
    <property type="entry name" value="ApsA"/>
</dbReference>
<dbReference type="InterPro" id="IPR051546">
    <property type="entry name" value="Aspartate_Ammonia-Lyase"/>
</dbReference>
<dbReference type="InterPro" id="IPR024083">
    <property type="entry name" value="Fumarase/histidase_N"/>
</dbReference>
<dbReference type="InterPro" id="IPR018951">
    <property type="entry name" value="Fumarase_C_C"/>
</dbReference>
<dbReference type="InterPro" id="IPR020557">
    <property type="entry name" value="Fumarate_lyase_CS"/>
</dbReference>
<dbReference type="InterPro" id="IPR000362">
    <property type="entry name" value="Fumarate_lyase_fam"/>
</dbReference>
<dbReference type="InterPro" id="IPR022761">
    <property type="entry name" value="Fumarate_lyase_N"/>
</dbReference>
<dbReference type="InterPro" id="IPR008948">
    <property type="entry name" value="L-Aspartase-like"/>
</dbReference>
<dbReference type="NCBIfam" id="TIGR00839">
    <property type="entry name" value="aspA"/>
    <property type="match status" value="1"/>
</dbReference>
<dbReference type="NCBIfam" id="NF008909">
    <property type="entry name" value="PRK12273.1"/>
    <property type="match status" value="1"/>
</dbReference>
<dbReference type="NCBIfam" id="NF011092">
    <property type="entry name" value="PRK14515.1"/>
    <property type="match status" value="1"/>
</dbReference>
<dbReference type="PANTHER" id="PTHR42696">
    <property type="entry name" value="ASPARTATE AMMONIA-LYASE"/>
    <property type="match status" value="1"/>
</dbReference>
<dbReference type="PANTHER" id="PTHR42696:SF2">
    <property type="entry name" value="ASPARTATE AMMONIA-LYASE"/>
    <property type="match status" value="1"/>
</dbReference>
<dbReference type="Pfam" id="PF10415">
    <property type="entry name" value="FumaraseC_C"/>
    <property type="match status" value="1"/>
</dbReference>
<dbReference type="Pfam" id="PF00206">
    <property type="entry name" value="Lyase_1"/>
    <property type="match status" value="1"/>
</dbReference>
<dbReference type="PRINTS" id="PR00145">
    <property type="entry name" value="ARGSUCLYASE"/>
</dbReference>
<dbReference type="PRINTS" id="PR00149">
    <property type="entry name" value="FUMRATELYASE"/>
</dbReference>
<dbReference type="SUPFAM" id="SSF48557">
    <property type="entry name" value="L-aspartase-like"/>
    <property type="match status" value="1"/>
</dbReference>
<dbReference type="PROSITE" id="PS00163">
    <property type="entry name" value="FUMARATE_LYASES"/>
    <property type="match status" value="1"/>
</dbReference>
<protein>
    <recommendedName>
        <fullName evidence="1">Aspartate ammonia-lyase</fullName>
        <shortName evidence="3">Aspartase</shortName>
        <ecNumber evidence="1">4.3.1.1</ecNumber>
    </recommendedName>
</protein>
<gene>
    <name evidence="3" type="primary">ansB</name>
    <name type="ordered locus">BSU23570</name>
</gene>